<evidence type="ECO:0000255" key="1">
    <source>
        <dbReference type="HAMAP-Rule" id="MF_00003"/>
    </source>
</evidence>
<keyword id="KW-0963">Cytoplasm</keyword>
<keyword id="KW-1185">Reference proteome</keyword>
<keyword id="KW-0690">Ribosome biogenesis</keyword>
<feature type="chain" id="PRO_1000000236" description="Ribosome-binding factor A">
    <location>
        <begin position="1"/>
        <end position="134"/>
    </location>
</feature>
<comment type="function">
    <text evidence="1">One of several proteins that assist in the late maturation steps of the functional core of the 30S ribosomal subunit. Associates with free 30S ribosomal subunits (but not with 30S subunits that are part of 70S ribosomes or polysomes). Required for efficient processing of 16S rRNA. May interact with the 5'-terminal helix region of 16S rRNA.</text>
</comment>
<comment type="subunit">
    <text evidence="1">Monomer. Binds 30S ribosomal subunits, but not 50S ribosomal subunits or 70S ribosomes.</text>
</comment>
<comment type="subcellular location">
    <subcellularLocation>
        <location evidence="1">Cytoplasm</location>
    </subcellularLocation>
</comment>
<comment type="similarity">
    <text evidence="1">Belongs to the RbfA family.</text>
</comment>
<reference key="1">
    <citation type="journal article" date="2006" name="Proc. Natl. Acad. Sci. U.S.A.">
        <title>Genome sequence of Synechococcus CC9311: insights into adaptation to a coastal environment.</title>
        <authorList>
            <person name="Palenik B."/>
            <person name="Ren Q."/>
            <person name="Dupont C.L."/>
            <person name="Myers G.S."/>
            <person name="Heidelberg J.F."/>
            <person name="Badger J.H."/>
            <person name="Madupu R."/>
            <person name="Nelson W.C."/>
            <person name="Brinkac L.M."/>
            <person name="Dodson R.J."/>
            <person name="Durkin A.S."/>
            <person name="Daugherty S.C."/>
            <person name="Sullivan S.A."/>
            <person name="Khouri H."/>
            <person name="Mohamoud Y."/>
            <person name="Halpin R."/>
            <person name="Paulsen I.T."/>
        </authorList>
    </citation>
    <scope>NUCLEOTIDE SEQUENCE [LARGE SCALE GENOMIC DNA]</scope>
    <source>
        <strain>CC9311</strain>
    </source>
</reference>
<sequence>MAQGRRVERVAALIRKETSELLIHGIRDERVHQGMVSITEVEVSGDLQHCRIFVSVFGEQAQKDEVMDGLEAARGFLRGELGRRLQMRRAPEIVFKLDLGIEKGTTVLHLLGELERERDERGDVTEGTELPDNP</sequence>
<gene>
    <name evidence="1" type="primary">rbfA</name>
    <name type="ordered locus">sync_2562</name>
</gene>
<accession>Q0I721</accession>
<protein>
    <recommendedName>
        <fullName evidence="1">Ribosome-binding factor A</fullName>
    </recommendedName>
</protein>
<proteinExistence type="inferred from homology"/>
<dbReference type="EMBL" id="CP000435">
    <property type="protein sequence ID" value="ABI45592.1"/>
    <property type="molecule type" value="Genomic_DNA"/>
</dbReference>
<dbReference type="RefSeq" id="WP_011620456.1">
    <property type="nucleotide sequence ID" value="NC_008319.1"/>
</dbReference>
<dbReference type="SMR" id="Q0I721"/>
<dbReference type="STRING" id="64471.sync_2562"/>
<dbReference type="KEGG" id="syg:sync_2562"/>
<dbReference type="eggNOG" id="COG0858">
    <property type="taxonomic scope" value="Bacteria"/>
</dbReference>
<dbReference type="HOGENOM" id="CLU_089475_2_1_3"/>
<dbReference type="OrthoDB" id="307788at2"/>
<dbReference type="Proteomes" id="UP000001961">
    <property type="component" value="Chromosome"/>
</dbReference>
<dbReference type="GO" id="GO:0005829">
    <property type="term" value="C:cytosol"/>
    <property type="evidence" value="ECO:0007669"/>
    <property type="project" value="TreeGrafter"/>
</dbReference>
<dbReference type="GO" id="GO:0043024">
    <property type="term" value="F:ribosomal small subunit binding"/>
    <property type="evidence" value="ECO:0007669"/>
    <property type="project" value="TreeGrafter"/>
</dbReference>
<dbReference type="GO" id="GO:0030490">
    <property type="term" value="P:maturation of SSU-rRNA"/>
    <property type="evidence" value="ECO:0007669"/>
    <property type="project" value="UniProtKB-UniRule"/>
</dbReference>
<dbReference type="Gene3D" id="3.30.300.20">
    <property type="match status" value="1"/>
</dbReference>
<dbReference type="HAMAP" id="MF_00003">
    <property type="entry name" value="RbfA"/>
    <property type="match status" value="1"/>
</dbReference>
<dbReference type="InterPro" id="IPR015946">
    <property type="entry name" value="KH_dom-like_a/b"/>
</dbReference>
<dbReference type="InterPro" id="IPR000238">
    <property type="entry name" value="RbfA"/>
</dbReference>
<dbReference type="InterPro" id="IPR023799">
    <property type="entry name" value="RbfA_dom_sf"/>
</dbReference>
<dbReference type="InterPro" id="IPR020053">
    <property type="entry name" value="Ribosome-bd_factorA_CS"/>
</dbReference>
<dbReference type="NCBIfam" id="TIGR00082">
    <property type="entry name" value="rbfA"/>
    <property type="match status" value="1"/>
</dbReference>
<dbReference type="PANTHER" id="PTHR33515">
    <property type="entry name" value="RIBOSOME-BINDING FACTOR A, CHLOROPLASTIC-RELATED"/>
    <property type="match status" value="1"/>
</dbReference>
<dbReference type="PANTHER" id="PTHR33515:SF1">
    <property type="entry name" value="RIBOSOME-BINDING FACTOR A, CHLOROPLASTIC-RELATED"/>
    <property type="match status" value="1"/>
</dbReference>
<dbReference type="Pfam" id="PF02033">
    <property type="entry name" value="RBFA"/>
    <property type="match status" value="1"/>
</dbReference>
<dbReference type="SUPFAM" id="SSF89919">
    <property type="entry name" value="Ribosome-binding factor A, RbfA"/>
    <property type="match status" value="1"/>
</dbReference>
<dbReference type="PROSITE" id="PS01319">
    <property type="entry name" value="RBFA"/>
    <property type="match status" value="1"/>
</dbReference>
<organism>
    <name type="scientific">Synechococcus sp. (strain CC9311)</name>
    <dbReference type="NCBI Taxonomy" id="64471"/>
    <lineage>
        <taxon>Bacteria</taxon>
        <taxon>Bacillati</taxon>
        <taxon>Cyanobacteriota</taxon>
        <taxon>Cyanophyceae</taxon>
        <taxon>Synechococcales</taxon>
        <taxon>Synechococcaceae</taxon>
        <taxon>Synechococcus</taxon>
    </lineage>
</organism>
<name>RBFA_SYNS3</name>